<evidence type="ECO:0000250" key="1"/>
<evidence type="ECO:0000256" key="2">
    <source>
        <dbReference type="SAM" id="MobiDB-lite"/>
    </source>
</evidence>
<evidence type="ECO:0000269" key="3">
    <source>
    </source>
</evidence>
<evidence type="ECO:0000305" key="4"/>
<organism>
    <name type="scientific">Mus musculus</name>
    <name type="common">Mouse</name>
    <dbReference type="NCBI Taxonomy" id="10090"/>
    <lineage>
        <taxon>Eukaryota</taxon>
        <taxon>Metazoa</taxon>
        <taxon>Chordata</taxon>
        <taxon>Craniata</taxon>
        <taxon>Vertebrata</taxon>
        <taxon>Euteleostomi</taxon>
        <taxon>Mammalia</taxon>
        <taxon>Eutheria</taxon>
        <taxon>Euarchontoglires</taxon>
        <taxon>Glires</taxon>
        <taxon>Rodentia</taxon>
        <taxon>Myomorpha</taxon>
        <taxon>Muroidea</taxon>
        <taxon>Muridae</taxon>
        <taxon>Murinae</taxon>
        <taxon>Mus</taxon>
        <taxon>Mus</taxon>
    </lineage>
</organism>
<proteinExistence type="evidence at protein level"/>
<comment type="function">
    <text>Could be a regulatory protein, possibly participating in receptor-mediated signal transduction at the plasma membrane. Has guanine nucleotide-binding activity but undetectable intrinsic GTPase activity.</text>
</comment>
<comment type="subunit">
    <text evidence="1">Interacts with calmodulin in a Ca(2+)-dependent manner. Calmodulin binding significantly decreases GTP binding. Binds ROCK1 (By similarity).</text>
</comment>
<comment type="interaction">
    <interactant intactId="EBI-7082069">
        <id>P55041</id>
    </interactant>
    <interactant intactId="EBI-359815">
        <id>P31946</id>
        <label>YWHAB</label>
    </interactant>
    <organismsDiffer>true</organismsDiffer>
    <experiments>3</experiments>
</comment>
<comment type="subcellular location">
    <subcellularLocation>
        <location>Cell membrane</location>
        <topology>Peripheral membrane protein</topology>
        <orientation>Cytoplasmic side</orientation>
    </subcellularLocation>
</comment>
<comment type="induction">
    <text>By mitogens.</text>
</comment>
<comment type="PTM">
    <text>Phosphorylated on tyrosine residues.</text>
</comment>
<comment type="similarity">
    <text evidence="4">Belongs to the small GTPase superfamily. RGK family.</text>
</comment>
<protein>
    <recommendedName>
        <fullName>GTP-binding protein GEM</fullName>
    </recommendedName>
    <alternativeName>
        <fullName>GTP-binding mitogen-induced T-cell protein</fullName>
    </alternativeName>
    <alternativeName>
        <fullName>RAS-like protein KIR</fullName>
    </alternativeName>
</protein>
<dbReference type="EMBL" id="U10551">
    <property type="protein sequence ID" value="AAA64912.1"/>
    <property type="molecule type" value="mRNA"/>
</dbReference>
<dbReference type="EMBL" id="U13053">
    <property type="protein sequence ID" value="AAC52145.1"/>
    <property type="molecule type" value="mRNA"/>
</dbReference>
<dbReference type="EMBL" id="BC029668">
    <property type="protein sequence ID" value="AAH29668.1"/>
    <property type="molecule type" value="mRNA"/>
</dbReference>
<dbReference type="CCDS" id="CCDS17971.1"/>
<dbReference type="PIR" id="B54575">
    <property type="entry name" value="B54575"/>
</dbReference>
<dbReference type="PIR" id="I49117">
    <property type="entry name" value="I49117"/>
</dbReference>
<dbReference type="RefSeq" id="NP_034406.2">
    <property type="nucleotide sequence ID" value="NM_010276.4"/>
</dbReference>
<dbReference type="SMR" id="P55041"/>
<dbReference type="BioGRID" id="199898">
    <property type="interactions" value="1"/>
</dbReference>
<dbReference type="FunCoup" id="P55041">
    <property type="interactions" value="456"/>
</dbReference>
<dbReference type="IntAct" id="P55041">
    <property type="interactions" value="2"/>
</dbReference>
<dbReference type="MINT" id="P55041"/>
<dbReference type="STRING" id="10090.ENSMUSP00000103939"/>
<dbReference type="iPTMnet" id="P55041"/>
<dbReference type="PhosphoSitePlus" id="P55041"/>
<dbReference type="jPOST" id="P55041"/>
<dbReference type="PaxDb" id="10090-ENSMUSP00000103939"/>
<dbReference type="PeptideAtlas" id="P55041"/>
<dbReference type="ProteomicsDB" id="268863"/>
<dbReference type="Antibodypedia" id="12852">
    <property type="antibodies" value="176 antibodies from 33 providers"/>
</dbReference>
<dbReference type="DNASU" id="14579"/>
<dbReference type="Ensembl" id="ENSMUST00000029868.7">
    <property type="protein sequence ID" value="ENSMUSP00000029868.7"/>
    <property type="gene ID" value="ENSMUSG00000028214.14"/>
</dbReference>
<dbReference type="Ensembl" id="ENSMUST00000108304.9">
    <property type="protein sequence ID" value="ENSMUSP00000103939.3"/>
    <property type="gene ID" value="ENSMUSG00000028214.14"/>
</dbReference>
<dbReference type="GeneID" id="14579"/>
<dbReference type="KEGG" id="mmu:14579"/>
<dbReference type="UCSC" id="uc008rzv.2">
    <property type="organism name" value="mouse"/>
</dbReference>
<dbReference type="AGR" id="MGI:99844"/>
<dbReference type="CTD" id="2669"/>
<dbReference type="MGI" id="MGI:99844">
    <property type="gene designation" value="Gem"/>
</dbReference>
<dbReference type="VEuPathDB" id="HostDB:ENSMUSG00000028214"/>
<dbReference type="eggNOG" id="KOG0395">
    <property type="taxonomic scope" value="Eukaryota"/>
</dbReference>
<dbReference type="GeneTree" id="ENSGT00940000157830"/>
<dbReference type="HOGENOM" id="CLU_041217_3_2_1"/>
<dbReference type="InParanoid" id="P55041"/>
<dbReference type="OMA" id="IRDHCMQ"/>
<dbReference type="OrthoDB" id="5239715at2759"/>
<dbReference type="PhylomeDB" id="P55041"/>
<dbReference type="TreeFam" id="TF314379"/>
<dbReference type="BioGRID-ORCS" id="14579">
    <property type="hits" value="3 hits in 79 CRISPR screens"/>
</dbReference>
<dbReference type="ChiTaRS" id="Gem">
    <property type="organism name" value="mouse"/>
</dbReference>
<dbReference type="PRO" id="PR:P55041"/>
<dbReference type="Proteomes" id="UP000000589">
    <property type="component" value="Chromosome 4"/>
</dbReference>
<dbReference type="RNAct" id="P55041">
    <property type="molecule type" value="protein"/>
</dbReference>
<dbReference type="Bgee" id="ENSMUSG00000028214">
    <property type="expression patterns" value="Expressed in ascending aorta and 156 other cell types or tissues"/>
</dbReference>
<dbReference type="ExpressionAtlas" id="P55041">
    <property type="expression patterns" value="baseline and differential"/>
</dbReference>
<dbReference type="GO" id="GO:0009898">
    <property type="term" value="C:cytoplasmic side of plasma membrane"/>
    <property type="evidence" value="ECO:0007669"/>
    <property type="project" value="Ensembl"/>
</dbReference>
<dbReference type="GO" id="GO:0030496">
    <property type="term" value="C:midbody"/>
    <property type="evidence" value="ECO:0007669"/>
    <property type="project" value="Ensembl"/>
</dbReference>
<dbReference type="GO" id="GO:0072686">
    <property type="term" value="C:mitotic spindle"/>
    <property type="evidence" value="ECO:0007669"/>
    <property type="project" value="Ensembl"/>
</dbReference>
<dbReference type="GO" id="GO:0005634">
    <property type="term" value="C:nucleus"/>
    <property type="evidence" value="ECO:0000314"/>
    <property type="project" value="MGI"/>
</dbReference>
<dbReference type="GO" id="GO:0005886">
    <property type="term" value="C:plasma membrane"/>
    <property type="evidence" value="ECO:0000304"/>
    <property type="project" value="Reactome"/>
</dbReference>
<dbReference type="GO" id="GO:0051233">
    <property type="term" value="C:spindle midzone"/>
    <property type="evidence" value="ECO:0007669"/>
    <property type="project" value="Ensembl"/>
</dbReference>
<dbReference type="GO" id="GO:0019003">
    <property type="term" value="F:GDP binding"/>
    <property type="evidence" value="ECO:0007669"/>
    <property type="project" value="Ensembl"/>
</dbReference>
<dbReference type="GO" id="GO:0005525">
    <property type="term" value="F:GTP binding"/>
    <property type="evidence" value="ECO:0007669"/>
    <property type="project" value="UniProtKB-KW"/>
</dbReference>
<dbReference type="GO" id="GO:0003924">
    <property type="term" value="F:GTPase activity"/>
    <property type="evidence" value="ECO:0007669"/>
    <property type="project" value="Ensembl"/>
</dbReference>
<dbReference type="GO" id="GO:0000287">
    <property type="term" value="F:magnesium ion binding"/>
    <property type="evidence" value="ECO:0007669"/>
    <property type="project" value="Ensembl"/>
</dbReference>
<dbReference type="GO" id="GO:0051276">
    <property type="term" value="P:chromosome organization"/>
    <property type="evidence" value="ECO:0007669"/>
    <property type="project" value="Ensembl"/>
</dbReference>
<dbReference type="GO" id="GO:0051310">
    <property type="term" value="P:metaphase chromosome alignment"/>
    <property type="evidence" value="ECO:0007669"/>
    <property type="project" value="Ensembl"/>
</dbReference>
<dbReference type="GO" id="GO:0000278">
    <property type="term" value="P:mitotic cell cycle"/>
    <property type="evidence" value="ECO:0007669"/>
    <property type="project" value="Ensembl"/>
</dbReference>
<dbReference type="CDD" id="cd04148">
    <property type="entry name" value="RGK"/>
    <property type="match status" value="1"/>
</dbReference>
<dbReference type="FunFam" id="3.40.50.300:FF:000311">
    <property type="entry name" value="GTP-binding protein RAD"/>
    <property type="match status" value="1"/>
</dbReference>
<dbReference type="Gene3D" id="3.40.50.300">
    <property type="entry name" value="P-loop containing nucleotide triphosphate hydrolases"/>
    <property type="match status" value="1"/>
</dbReference>
<dbReference type="InterPro" id="IPR027417">
    <property type="entry name" value="P-loop_NTPase"/>
</dbReference>
<dbReference type="InterPro" id="IPR017358">
    <property type="entry name" value="RGK"/>
</dbReference>
<dbReference type="InterPro" id="IPR051641">
    <property type="entry name" value="RGK_GTP-binding_reg"/>
</dbReference>
<dbReference type="InterPro" id="IPR005225">
    <property type="entry name" value="Small_GTP-bd"/>
</dbReference>
<dbReference type="InterPro" id="IPR001806">
    <property type="entry name" value="Small_GTPase"/>
</dbReference>
<dbReference type="NCBIfam" id="TIGR00231">
    <property type="entry name" value="small_GTP"/>
    <property type="match status" value="1"/>
</dbReference>
<dbReference type="PANTHER" id="PTHR45775:SF4">
    <property type="entry name" value="GTP-BINDING PROTEIN GEM"/>
    <property type="match status" value="1"/>
</dbReference>
<dbReference type="PANTHER" id="PTHR45775">
    <property type="entry name" value="RAD, GEM/KIR FAMILY MEMBER 2, ISOFORM C"/>
    <property type="match status" value="1"/>
</dbReference>
<dbReference type="Pfam" id="PF00071">
    <property type="entry name" value="Ras"/>
    <property type="match status" value="1"/>
</dbReference>
<dbReference type="PIRSF" id="PIRSF038017">
    <property type="entry name" value="GTP-binding_GEM"/>
    <property type="match status" value="1"/>
</dbReference>
<dbReference type="PRINTS" id="PR00449">
    <property type="entry name" value="RASTRNSFRMNG"/>
</dbReference>
<dbReference type="SMART" id="SM00175">
    <property type="entry name" value="RAB"/>
    <property type="match status" value="1"/>
</dbReference>
<dbReference type="SMART" id="SM00173">
    <property type="entry name" value="RAS"/>
    <property type="match status" value="1"/>
</dbReference>
<dbReference type="SMART" id="SM00174">
    <property type="entry name" value="RHO"/>
    <property type="match status" value="1"/>
</dbReference>
<dbReference type="SUPFAM" id="SSF52540">
    <property type="entry name" value="P-loop containing nucleoside triphosphate hydrolases"/>
    <property type="match status" value="1"/>
</dbReference>
<dbReference type="PROSITE" id="PS51421">
    <property type="entry name" value="RAS"/>
    <property type="match status" value="1"/>
</dbReference>
<sequence>MTLNNVTMRQGTVGMQPQQRWSIPADARHLMVQKDPHPCNLRNRHSTAPEEHCRRSWSSDSTDSVISSESGNTYYRVVLIGEQGVGKSTLANIFAGVHDSMDSDCEVLGEDTYERTLVVDGESATIILLDMWENKGENEWLHDHCMQVGDAYLIVYSITDRASFEKASELRIQLRRARQTEDIPIILVGNKSDLVRCREVSVSEGRACAVVFDCKFIETSAAVQHNVKELFEGIVRQVRLRRDSKEKNERRLAYQKRRESIPRKARRFWGKIVAKNNKNMAFKLKSKSCHDLSVL</sequence>
<reference key="1">
    <citation type="journal article" date="1994" name="Science">
        <title>Gem: an induced, immediate early protein belonging to the Ras family.</title>
        <authorList>
            <person name="Maguire J."/>
            <person name="Santoro T."/>
            <person name="Jensen P."/>
            <person name="Siebenlist U."/>
            <person name="Yewdell J."/>
            <person name="Kelly K."/>
        </authorList>
    </citation>
    <scope>NUCLEOTIDE SEQUENCE [MRNA]</scope>
</reference>
<reference key="2">
    <citation type="journal article" date="1994" name="Proc. Natl. Acad. Sci. U.S.A.">
        <title>Transcriptional activation of a ras-like gene (kir) by oncogenic tyrosine kinases.</title>
        <authorList>
            <person name="Cohen L."/>
            <person name="Mohr R."/>
            <person name="Chen Y.-Y."/>
            <person name="Huang M."/>
            <person name="Kato R."/>
            <person name="Dorin D."/>
            <person name="Tamanoi F."/>
            <person name="Goga A."/>
            <person name="Afar D."/>
            <person name="Rosenberg N."/>
            <person name="Witte O."/>
        </authorList>
    </citation>
    <scope>NUCLEOTIDE SEQUENCE [MRNA]</scope>
</reference>
<reference key="3">
    <citation type="journal article" date="2004" name="Genome Res.">
        <title>The status, quality, and expansion of the NIH full-length cDNA project: the Mammalian Gene Collection (MGC).</title>
        <authorList>
            <consortium name="The MGC Project Team"/>
        </authorList>
    </citation>
    <scope>NUCLEOTIDE SEQUENCE [LARGE SCALE MRNA]</scope>
    <source>
        <strain>C57BL/6J</strain>
        <tissue>Retina</tissue>
    </source>
</reference>
<reference key="4">
    <citation type="journal article" date="1996" name="J. Biol. Chem.">
        <title>Calmodulin binds to and inhibits GTP binding of the ras-like GTPase Kir/Gem.</title>
        <authorList>
            <person name="Fischer R."/>
            <person name="Wei Y."/>
            <person name="Anagli J."/>
            <person name="Berchtold M.W."/>
        </authorList>
    </citation>
    <scope>INTERACTION WITH CALMODULIN</scope>
    <scope>MUTAGENESIS OF TRP-269</scope>
</reference>
<gene>
    <name type="primary">Gem</name>
    <name type="synonym">Kir</name>
</gene>
<feature type="chain" id="PRO_0000122476" description="GTP-binding protein GEM">
    <location>
        <begin position="1"/>
        <end position="295"/>
    </location>
</feature>
<feature type="region of interest" description="Disordered" evidence="2">
    <location>
        <begin position="39"/>
        <end position="64"/>
    </location>
</feature>
<feature type="region of interest" description="Calmodulin-binding">
    <location>
        <begin position="265"/>
        <end position="284"/>
    </location>
</feature>
<feature type="binding site" evidence="1">
    <location>
        <begin position="81"/>
        <end position="88"/>
    </location>
    <ligand>
        <name>GTP</name>
        <dbReference type="ChEBI" id="CHEBI:37565"/>
    </ligand>
</feature>
<feature type="binding site" evidence="1">
    <location>
        <begin position="190"/>
        <end position="193"/>
    </location>
    <ligand>
        <name>GTP</name>
        <dbReference type="ChEBI" id="CHEBI:37565"/>
    </ligand>
</feature>
<feature type="mutagenesis site" description="No calmodulin binding." evidence="3">
    <original>W</original>
    <variation>G</variation>
    <location>
        <position position="269"/>
    </location>
</feature>
<feature type="sequence conflict" description="In Ref. 1; AAA64912." evidence="4" ref="1">
    <original>I</original>
    <variation>M</variation>
    <location>
        <position position="23"/>
    </location>
</feature>
<feature type="sequence conflict" description="In Ref. 1; AAA64912." evidence="4" ref="1">
    <original>S</original>
    <variation>T</variation>
    <location>
        <position position="56"/>
    </location>
</feature>
<feature type="sequence conflict" description="In Ref. 1; AAA64912." evidence="4" ref="1">
    <original>V</original>
    <variation>E</variation>
    <location>
        <position position="235"/>
    </location>
</feature>
<feature type="sequence conflict" description="In Ref. 1; AAA64912." evidence="4" ref="1">
    <original>R</original>
    <variation>P</variation>
    <location>
        <position position="241"/>
    </location>
</feature>
<feature type="sequence conflict" description="In Ref. 1; AAA64912." evidence="4" ref="1">
    <original>FKL</original>
    <variation>SSS</variation>
    <location>
        <begin position="282"/>
        <end position="284"/>
    </location>
</feature>
<feature type="sequence conflict" description="In Ref. 2; AAC52145." evidence="4" ref="2">
    <original>V</original>
    <variation>W</variation>
    <location>
        <position position="294"/>
    </location>
</feature>
<accession>P55041</accession>
<accession>Q8JZS1</accession>
<keyword id="KW-1003">Cell membrane</keyword>
<keyword id="KW-0342">GTP-binding</keyword>
<keyword id="KW-0472">Membrane</keyword>
<keyword id="KW-0547">Nucleotide-binding</keyword>
<keyword id="KW-0597">Phosphoprotein</keyword>
<keyword id="KW-1185">Reference proteome</keyword>
<name>GEM_MOUSE</name>